<dbReference type="EMBL" id="CP001078">
    <property type="protein sequence ID" value="ACD53753.1"/>
    <property type="molecule type" value="Genomic_DNA"/>
</dbReference>
<dbReference type="RefSeq" id="WP_003373046.1">
    <property type="nucleotide sequence ID" value="NC_010723.1"/>
</dbReference>
<dbReference type="SMR" id="B2UZJ7"/>
<dbReference type="KEGG" id="cbt:CLH_0487"/>
<dbReference type="HOGENOM" id="CLU_085114_4_0_9"/>
<dbReference type="GO" id="GO:0005886">
    <property type="term" value="C:plasma membrane"/>
    <property type="evidence" value="ECO:0007669"/>
    <property type="project" value="UniProtKB-SubCell"/>
</dbReference>
<dbReference type="GO" id="GO:0045259">
    <property type="term" value="C:proton-transporting ATP synthase complex"/>
    <property type="evidence" value="ECO:0007669"/>
    <property type="project" value="UniProtKB-KW"/>
</dbReference>
<dbReference type="GO" id="GO:0046933">
    <property type="term" value="F:proton-transporting ATP synthase activity, rotational mechanism"/>
    <property type="evidence" value="ECO:0007669"/>
    <property type="project" value="UniProtKB-UniRule"/>
</dbReference>
<dbReference type="Gene3D" id="1.10.520.20">
    <property type="entry name" value="N-terminal domain of the delta subunit of the F1F0-ATP synthase"/>
    <property type="match status" value="1"/>
</dbReference>
<dbReference type="HAMAP" id="MF_01416">
    <property type="entry name" value="ATP_synth_delta_bact"/>
    <property type="match status" value="1"/>
</dbReference>
<dbReference type="InterPro" id="IPR026015">
    <property type="entry name" value="ATP_synth_OSCP/delta_N_sf"/>
</dbReference>
<dbReference type="InterPro" id="IPR020781">
    <property type="entry name" value="ATPase_OSCP/d_CS"/>
</dbReference>
<dbReference type="InterPro" id="IPR000711">
    <property type="entry name" value="ATPase_OSCP/dsu"/>
</dbReference>
<dbReference type="NCBIfam" id="TIGR01145">
    <property type="entry name" value="ATP_synt_delta"/>
    <property type="match status" value="1"/>
</dbReference>
<dbReference type="NCBIfam" id="NF004403">
    <property type="entry name" value="PRK05758.2-4"/>
    <property type="match status" value="1"/>
</dbReference>
<dbReference type="PANTHER" id="PTHR11910">
    <property type="entry name" value="ATP SYNTHASE DELTA CHAIN"/>
    <property type="match status" value="1"/>
</dbReference>
<dbReference type="Pfam" id="PF00213">
    <property type="entry name" value="OSCP"/>
    <property type="match status" value="1"/>
</dbReference>
<dbReference type="PRINTS" id="PR00125">
    <property type="entry name" value="ATPASEDELTA"/>
</dbReference>
<dbReference type="SUPFAM" id="SSF47928">
    <property type="entry name" value="N-terminal domain of the delta subunit of the F1F0-ATP synthase"/>
    <property type="match status" value="1"/>
</dbReference>
<dbReference type="PROSITE" id="PS00389">
    <property type="entry name" value="ATPASE_DELTA"/>
    <property type="match status" value="1"/>
</dbReference>
<reference key="1">
    <citation type="submission" date="2008-05" db="EMBL/GenBank/DDBJ databases">
        <title>Complete genome sequence of Clostridium botulinum E3 str. Alaska E43.</title>
        <authorList>
            <person name="Brinkac L.M."/>
            <person name="Brown J.L."/>
            <person name="Bruce D."/>
            <person name="Detter C."/>
            <person name="Munk C."/>
            <person name="Smith L.A."/>
            <person name="Smith T.J."/>
            <person name="Sutton G."/>
            <person name="Brettin T.S."/>
        </authorList>
    </citation>
    <scope>NUCLEOTIDE SEQUENCE [LARGE SCALE GENOMIC DNA]</scope>
    <source>
        <strain>Alaska E43 / Type E3</strain>
    </source>
</reference>
<organism>
    <name type="scientific">Clostridium botulinum (strain Alaska E43 / Type E3)</name>
    <dbReference type="NCBI Taxonomy" id="508767"/>
    <lineage>
        <taxon>Bacteria</taxon>
        <taxon>Bacillati</taxon>
        <taxon>Bacillota</taxon>
        <taxon>Clostridia</taxon>
        <taxon>Eubacteriales</taxon>
        <taxon>Clostridiaceae</taxon>
        <taxon>Clostridium</taxon>
    </lineage>
</organism>
<feature type="chain" id="PRO_0000370945" description="ATP synthase subunit delta">
    <location>
        <begin position="1"/>
        <end position="179"/>
    </location>
</feature>
<proteinExistence type="inferred from homology"/>
<accession>B2UZJ7</accession>
<protein>
    <recommendedName>
        <fullName evidence="1">ATP synthase subunit delta</fullName>
    </recommendedName>
    <alternativeName>
        <fullName evidence="1">ATP synthase F(1) sector subunit delta</fullName>
    </alternativeName>
    <alternativeName>
        <fullName evidence="1">F-type ATPase subunit delta</fullName>
        <shortName evidence="1">F-ATPase subunit delta</shortName>
    </alternativeName>
</protein>
<name>ATPD_CLOBA</name>
<keyword id="KW-0066">ATP synthesis</keyword>
<keyword id="KW-1003">Cell membrane</keyword>
<keyword id="KW-0139">CF(1)</keyword>
<keyword id="KW-0375">Hydrogen ion transport</keyword>
<keyword id="KW-0406">Ion transport</keyword>
<keyword id="KW-0472">Membrane</keyword>
<keyword id="KW-0813">Transport</keyword>
<sequence>MYEYLDRRYALALYQVAEKKGKVDEYLQDLREICELIENNHEFYEVIKHPQISTKKKKKTFISIFKDKIDEELLSFLLILIEKDRILYLREKLNEMEKIDLERKNTLKGIIKTAIPLLSNEFDNLRDIFQKKYDKNILFETEVDRNLLGGVYVRVGHDVIDDTVKSKIEEMKDLMLKQK</sequence>
<gene>
    <name evidence="1" type="primary">atpH</name>
    <name type="ordered locus">CLH_0487</name>
</gene>
<evidence type="ECO:0000255" key="1">
    <source>
        <dbReference type="HAMAP-Rule" id="MF_01416"/>
    </source>
</evidence>
<comment type="function">
    <text evidence="1">F(1)F(0) ATP synthase produces ATP from ADP in the presence of a proton or sodium gradient. F-type ATPases consist of two structural domains, F(1) containing the extramembraneous catalytic core and F(0) containing the membrane proton channel, linked together by a central stalk and a peripheral stalk. During catalysis, ATP synthesis in the catalytic domain of F(1) is coupled via a rotary mechanism of the central stalk subunits to proton translocation.</text>
</comment>
<comment type="function">
    <text evidence="1">This protein is part of the stalk that links CF(0) to CF(1). It either transmits conformational changes from CF(0) to CF(1) or is implicated in proton conduction.</text>
</comment>
<comment type="subunit">
    <text evidence="1">F-type ATPases have 2 components, F(1) - the catalytic core - and F(0) - the membrane proton channel. F(1) has five subunits: alpha(3), beta(3), gamma(1), delta(1), epsilon(1). F(0) has three main subunits: a(1), b(2) and c(10-14). The alpha and beta chains form an alternating ring which encloses part of the gamma chain. F(1) is attached to F(0) by a central stalk formed by the gamma and epsilon chains, while a peripheral stalk is formed by the delta and b chains.</text>
</comment>
<comment type="subcellular location">
    <subcellularLocation>
        <location evidence="1">Cell membrane</location>
        <topology evidence="1">Peripheral membrane protein</topology>
    </subcellularLocation>
</comment>
<comment type="similarity">
    <text evidence="1">Belongs to the ATPase delta chain family.</text>
</comment>